<evidence type="ECO:0000250" key="1"/>
<evidence type="ECO:0000255" key="2"/>
<evidence type="ECO:0000256" key="3">
    <source>
        <dbReference type="SAM" id="MobiDB-lite"/>
    </source>
</evidence>
<evidence type="ECO:0000305" key="4"/>
<protein>
    <recommendedName>
        <fullName>Beta-defensin 125</fullName>
    </recommendedName>
    <alternativeName>
        <fullName>Defensin, beta 125</fullName>
    </alternativeName>
</protein>
<organism>
    <name type="scientific">Pongo pygmaeus</name>
    <name type="common">Bornean orangutan</name>
    <dbReference type="NCBI Taxonomy" id="9600"/>
    <lineage>
        <taxon>Eukaryota</taxon>
        <taxon>Metazoa</taxon>
        <taxon>Chordata</taxon>
        <taxon>Craniata</taxon>
        <taxon>Vertebrata</taxon>
        <taxon>Euteleostomi</taxon>
        <taxon>Mammalia</taxon>
        <taxon>Eutheria</taxon>
        <taxon>Euarchontoglires</taxon>
        <taxon>Primates</taxon>
        <taxon>Haplorrhini</taxon>
        <taxon>Catarrhini</taxon>
        <taxon>Hominidae</taxon>
        <taxon>Pongo</taxon>
    </lineage>
</organism>
<name>DB125_PONPY</name>
<comment type="function">
    <text evidence="4">Has antibacterial activity.</text>
</comment>
<comment type="subcellular location">
    <subcellularLocation>
        <location evidence="4">Secreted</location>
    </subcellularLocation>
</comment>
<comment type="similarity">
    <text evidence="4">Belongs to the beta-defensin family.</text>
</comment>
<accession>A4H239</accession>
<dbReference type="EMBL" id="AM410144">
    <property type="protein sequence ID" value="CAL68983.1"/>
    <property type="molecule type" value="Genomic_DNA"/>
</dbReference>
<dbReference type="RefSeq" id="XP_054322834.1">
    <property type="nucleotide sequence ID" value="XM_054466859.1"/>
</dbReference>
<dbReference type="GeneID" id="129021457"/>
<dbReference type="GO" id="GO:0005576">
    <property type="term" value="C:extracellular region"/>
    <property type="evidence" value="ECO:0007669"/>
    <property type="project" value="UniProtKB-SubCell"/>
</dbReference>
<dbReference type="GO" id="GO:0050829">
    <property type="term" value="P:defense response to Gram-negative bacterium"/>
    <property type="evidence" value="ECO:0007669"/>
    <property type="project" value="UniProtKB-ARBA"/>
</dbReference>
<dbReference type="GO" id="GO:0045087">
    <property type="term" value="P:innate immune response"/>
    <property type="evidence" value="ECO:0007669"/>
    <property type="project" value="InterPro"/>
</dbReference>
<dbReference type="Gene3D" id="3.10.360.10">
    <property type="entry name" value="Antimicrobial Peptide, Beta-defensin 2, Chain A"/>
    <property type="match status" value="1"/>
</dbReference>
<dbReference type="InterPro" id="IPR050544">
    <property type="entry name" value="Beta-defensin"/>
</dbReference>
<dbReference type="InterPro" id="IPR025933">
    <property type="entry name" value="Beta_defensin_dom"/>
</dbReference>
<dbReference type="PANTHER" id="PTHR15001">
    <property type="entry name" value="BETA-DEFENSIN 123-RELATED"/>
    <property type="match status" value="1"/>
</dbReference>
<dbReference type="PANTHER" id="PTHR15001:SF12">
    <property type="entry name" value="BETA-DEFENSIN 125"/>
    <property type="match status" value="1"/>
</dbReference>
<dbReference type="Pfam" id="PF13841">
    <property type="entry name" value="Defensin_beta_2"/>
    <property type="match status" value="1"/>
</dbReference>
<proteinExistence type="inferred from homology"/>
<reference key="1">
    <citation type="submission" date="2006-11" db="EMBL/GenBank/DDBJ databases">
        <title>Evolution and sequence variation of human beta-defensin genes.</title>
        <authorList>
            <person name="Hollox E.J."/>
            <person name="Armour J.A.L."/>
        </authorList>
    </citation>
    <scope>NUCLEOTIDE SEQUENCE [GENOMIC DNA]</scope>
</reference>
<gene>
    <name type="primary">DEFB125</name>
</gene>
<sequence length="157" mass="17657">MNLLMLTFIICGLLTQVTKGSFEPQKCWKNNIGHCRRRCLDTERYILLCRNKLSCCISIIISHEYTRRPAFPVIHLEDITFDYSDVDSFTGSPVSMLNDLITFDTTKFGETITPETNTPETTMPPSETTSSKTTMPPSETATSETMPPPSQTALTHN</sequence>
<feature type="signal peptide" evidence="2">
    <location>
        <begin position="1"/>
        <end position="20"/>
    </location>
</feature>
<feature type="chain" id="PRO_0000289843" description="Beta-defensin 125">
    <location>
        <begin position="21"/>
        <end position="157"/>
    </location>
</feature>
<feature type="region of interest" description="Disordered" evidence="3">
    <location>
        <begin position="109"/>
        <end position="157"/>
    </location>
</feature>
<feature type="compositionally biased region" description="Low complexity" evidence="3">
    <location>
        <begin position="110"/>
        <end position="140"/>
    </location>
</feature>
<feature type="compositionally biased region" description="Polar residues" evidence="3">
    <location>
        <begin position="141"/>
        <end position="157"/>
    </location>
</feature>
<feature type="disulfide bond" evidence="1">
    <location>
        <begin position="27"/>
        <end position="55"/>
    </location>
</feature>
<feature type="disulfide bond" evidence="1">
    <location>
        <begin position="35"/>
        <end position="49"/>
    </location>
</feature>
<feature type="disulfide bond" evidence="1">
    <location>
        <begin position="39"/>
        <end position="56"/>
    </location>
</feature>
<keyword id="KW-0044">Antibiotic</keyword>
<keyword id="KW-0929">Antimicrobial</keyword>
<keyword id="KW-0211">Defensin</keyword>
<keyword id="KW-1015">Disulfide bond</keyword>
<keyword id="KW-0964">Secreted</keyword>
<keyword id="KW-0732">Signal</keyword>